<proteinExistence type="inferred from homology"/>
<sequence length="75" mass="8843">MARFFRRRKFCRFTAEGVQEIDYKDVATLKNYITEAGKIVPSRITGTSAKYQRQLARAIKRSRYLALLPYTDKHQ</sequence>
<name>RS18_VIBC1</name>
<organism>
    <name type="scientific">Vibrio campbellii (strain ATCC BAA-1116)</name>
    <dbReference type="NCBI Taxonomy" id="2902295"/>
    <lineage>
        <taxon>Bacteria</taxon>
        <taxon>Pseudomonadati</taxon>
        <taxon>Pseudomonadota</taxon>
        <taxon>Gammaproteobacteria</taxon>
        <taxon>Vibrionales</taxon>
        <taxon>Vibrionaceae</taxon>
        <taxon>Vibrio</taxon>
    </lineage>
</organism>
<keyword id="KW-0687">Ribonucleoprotein</keyword>
<keyword id="KW-0689">Ribosomal protein</keyword>
<keyword id="KW-0694">RNA-binding</keyword>
<keyword id="KW-0699">rRNA-binding</keyword>
<reference key="1">
    <citation type="submission" date="2007-08" db="EMBL/GenBank/DDBJ databases">
        <authorList>
            <consortium name="The Vibrio harveyi Genome Sequencing Project"/>
            <person name="Bassler B."/>
            <person name="Clifton S.W."/>
            <person name="Fulton L."/>
            <person name="Delehaunty K."/>
            <person name="Fronick C."/>
            <person name="Harrison M."/>
            <person name="Markivic C."/>
            <person name="Fulton R."/>
            <person name="Tin-Wollam A.-M."/>
            <person name="Shah N."/>
            <person name="Pepin K."/>
            <person name="Nash W."/>
            <person name="Thiruvilangam P."/>
            <person name="Bhonagiri V."/>
            <person name="Waters C."/>
            <person name="Tu K.C."/>
            <person name="Irgon J."/>
            <person name="Wilson R.K."/>
        </authorList>
    </citation>
    <scope>NUCLEOTIDE SEQUENCE [LARGE SCALE GENOMIC DNA]</scope>
    <source>
        <strain>ATCC BAA-1116 / BB120</strain>
    </source>
</reference>
<dbReference type="EMBL" id="CP000789">
    <property type="protein sequence ID" value="ABU69081.1"/>
    <property type="molecule type" value="Genomic_DNA"/>
</dbReference>
<dbReference type="RefSeq" id="WP_000090472.1">
    <property type="nucleotide sequence ID" value="NC_022269.1"/>
</dbReference>
<dbReference type="SMR" id="A7MSX6"/>
<dbReference type="GeneID" id="97173128"/>
<dbReference type="KEGG" id="vha:VIBHAR_00021"/>
<dbReference type="PATRIC" id="fig|338187.25.peg.2501"/>
<dbReference type="Proteomes" id="UP000008152">
    <property type="component" value="Chromosome I"/>
</dbReference>
<dbReference type="GO" id="GO:0022627">
    <property type="term" value="C:cytosolic small ribosomal subunit"/>
    <property type="evidence" value="ECO:0007669"/>
    <property type="project" value="TreeGrafter"/>
</dbReference>
<dbReference type="GO" id="GO:0070181">
    <property type="term" value="F:small ribosomal subunit rRNA binding"/>
    <property type="evidence" value="ECO:0007669"/>
    <property type="project" value="TreeGrafter"/>
</dbReference>
<dbReference type="GO" id="GO:0003735">
    <property type="term" value="F:structural constituent of ribosome"/>
    <property type="evidence" value="ECO:0007669"/>
    <property type="project" value="InterPro"/>
</dbReference>
<dbReference type="GO" id="GO:0006412">
    <property type="term" value="P:translation"/>
    <property type="evidence" value="ECO:0007669"/>
    <property type="project" value="UniProtKB-UniRule"/>
</dbReference>
<dbReference type="FunFam" id="4.10.640.10:FF:000001">
    <property type="entry name" value="30S ribosomal protein S18"/>
    <property type="match status" value="1"/>
</dbReference>
<dbReference type="Gene3D" id="4.10.640.10">
    <property type="entry name" value="Ribosomal protein S18"/>
    <property type="match status" value="1"/>
</dbReference>
<dbReference type="HAMAP" id="MF_00270">
    <property type="entry name" value="Ribosomal_bS18"/>
    <property type="match status" value="1"/>
</dbReference>
<dbReference type="InterPro" id="IPR001648">
    <property type="entry name" value="Ribosomal_bS18"/>
</dbReference>
<dbReference type="InterPro" id="IPR018275">
    <property type="entry name" value="Ribosomal_bS18_CS"/>
</dbReference>
<dbReference type="InterPro" id="IPR036870">
    <property type="entry name" value="Ribosomal_bS18_sf"/>
</dbReference>
<dbReference type="NCBIfam" id="TIGR00165">
    <property type="entry name" value="S18"/>
    <property type="match status" value="1"/>
</dbReference>
<dbReference type="PANTHER" id="PTHR13479">
    <property type="entry name" value="30S RIBOSOMAL PROTEIN S18"/>
    <property type="match status" value="1"/>
</dbReference>
<dbReference type="PANTHER" id="PTHR13479:SF40">
    <property type="entry name" value="SMALL RIBOSOMAL SUBUNIT PROTEIN BS18M"/>
    <property type="match status" value="1"/>
</dbReference>
<dbReference type="Pfam" id="PF01084">
    <property type="entry name" value="Ribosomal_S18"/>
    <property type="match status" value="1"/>
</dbReference>
<dbReference type="PRINTS" id="PR00974">
    <property type="entry name" value="RIBOSOMALS18"/>
</dbReference>
<dbReference type="SUPFAM" id="SSF46911">
    <property type="entry name" value="Ribosomal protein S18"/>
    <property type="match status" value="1"/>
</dbReference>
<dbReference type="PROSITE" id="PS00057">
    <property type="entry name" value="RIBOSOMAL_S18"/>
    <property type="match status" value="1"/>
</dbReference>
<feature type="chain" id="PRO_1000003655" description="Small ribosomal subunit protein bS18">
    <location>
        <begin position="1"/>
        <end position="75"/>
    </location>
</feature>
<accession>A7MSX6</accession>
<evidence type="ECO:0000255" key="1">
    <source>
        <dbReference type="HAMAP-Rule" id="MF_00270"/>
    </source>
</evidence>
<evidence type="ECO:0000305" key="2"/>
<comment type="function">
    <text evidence="1">Binds as a heterodimer with protein bS6 to the central domain of the 16S rRNA, where it helps stabilize the platform of the 30S subunit.</text>
</comment>
<comment type="subunit">
    <text evidence="1">Part of the 30S ribosomal subunit. Forms a tight heterodimer with protein bS6.</text>
</comment>
<comment type="similarity">
    <text evidence="1">Belongs to the bacterial ribosomal protein bS18 family.</text>
</comment>
<gene>
    <name evidence="1" type="primary">rpsR</name>
    <name type="ordered locus">VIBHAR_00021</name>
</gene>
<protein>
    <recommendedName>
        <fullName evidence="1">Small ribosomal subunit protein bS18</fullName>
    </recommendedName>
    <alternativeName>
        <fullName evidence="2">30S ribosomal protein S18</fullName>
    </alternativeName>
</protein>